<accession>Q7LXL5</accession>
<accession>Q9UXB7</accession>
<gene>
    <name type="primary">xpf</name>
    <name type="ordered locus">SSO0729</name>
    <name type="ORF">ORF-c10_001</name>
</gene>
<keyword id="KW-0067">ATP-binding</keyword>
<keyword id="KW-0227">DNA damage</keyword>
<keyword id="KW-0233">DNA recombination</keyword>
<keyword id="KW-0234">DNA repair</keyword>
<keyword id="KW-0238">DNA-binding</keyword>
<keyword id="KW-0255">Endonuclease</keyword>
<keyword id="KW-0378">Hydrolase</keyword>
<keyword id="KW-0540">Nuclease</keyword>
<keyword id="KW-0547">Nucleotide-binding</keyword>
<keyword id="KW-1185">Reference proteome</keyword>
<sequence>MVIRIYADDREKASGIPELLKELGITVIFSQLTVADYVITDDVAVERKSVNDLVNSVFDKRFFDQISRLSEVYRFPILLVEGDINDIRKITEKWRAINNALISATIDYDVKVFYSRDKKDTAEVLKKIAEKFQFGENKSNRISLHNKAKLESVSDIQLYIVESFPNVGSILAERLLLKFGTIQNICNASISELEKALGSRKKAEDIYKILRTHYSKTNLDNDSKKTTSLFDFL</sequence>
<feature type="chain" id="PRO_0000429324" description="3'-flap repair endonuclease Xpf">
    <location>
        <begin position="1"/>
        <end position="233"/>
    </location>
</feature>
<feature type="domain" description="ERCC4">
    <location>
        <begin position="8"/>
        <end position="127"/>
    </location>
</feature>
<feature type="mutagenesis site" description="Loss of nuclease activity." evidence="1">
    <original>D</original>
    <variation>A</variation>
    <location>
        <position position="52"/>
    </location>
</feature>
<feature type="mutagenesis site" description="Loss of interaction with PCNA heterotrimer, no nuclease activity." evidence="1">
    <location>
        <begin position="228"/>
        <end position="233"/>
    </location>
</feature>
<protein>
    <recommendedName>
        <fullName>3'-flap repair endonuclease Xpf</fullName>
        <shortName>XPF</shortName>
    </recommendedName>
</protein>
<name>XPF_SACS2</name>
<comment type="function">
    <text evidence="1">A structure-specific endonuclease, cleaves 5' of ds/ssDNA interfaces in 3' flap structures, although it also cuts bubble, Y-DNA structures and mobile and immobile Holliday junctions. Cuts preferentially after pyrimidines, may continue to progressively cleave substrate upstream of the initial cleavage, at least in vitro. May be involved in nucleotide excision repair.</text>
</comment>
<comment type="cofactor">
    <cofactor evidence="1">
        <name>Mg(2+)</name>
        <dbReference type="ChEBI" id="CHEBI:18420"/>
    </cofactor>
</comment>
<comment type="activity regulation">
    <text evidence="1">Nuclease function requires interaction with the PCNA heterotrimer. Inhibited by SSB, even in the presence of PCNA.</text>
</comment>
<comment type="subunit">
    <text evidence="1">Interacts with PCNA heterotrimer via PCNA1 and PCNA3.</text>
</comment>
<organism>
    <name type="scientific">Saccharolobus solfataricus (strain ATCC 35092 / DSM 1617 / JCM 11322 / P2)</name>
    <name type="common">Sulfolobus solfataricus</name>
    <dbReference type="NCBI Taxonomy" id="273057"/>
    <lineage>
        <taxon>Archaea</taxon>
        <taxon>Thermoproteota</taxon>
        <taxon>Thermoprotei</taxon>
        <taxon>Sulfolobales</taxon>
        <taxon>Sulfolobaceae</taxon>
        <taxon>Saccharolobus</taxon>
    </lineage>
</organism>
<evidence type="ECO:0000269" key="1">
    <source>
    </source>
</evidence>
<proteinExistence type="evidence at protein level"/>
<reference key="1">
    <citation type="journal article" date="2000" name="Genome">
        <title>Gene content and organization of a 281-kbp contig from the genome of the extremely thermophilic archaeon, Sulfolobus solfataricus P2.</title>
        <authorList>
            <person name="Charlebois R.L."/>
            <person name="Singh R.K."/>
            <person name="Chan-Weiher C.C.-Y."/>
            <person name="Allard G."/>
            <person name="Chow C."/>
            <person name="Confalonieri F."/>
            <person name="Curtis B."/>
            <person name="Duguet M."/>
            <person name="Erauso G."/>
            <person name="Faguy D."/>
            <person name="Gaasterland T."/>
            <person name="Garrett R.A."/>
            <person name="Gordon P."/>
            <person name="Jeffries A.C."/>
            <person name="Kozera C."/>
            <person name="Kushwaha N."/>
            <person name="Lafleur E."/>
            <person name="Medina N."/>
            <person name="Peng X."/>
            <person name="Penny S.L."/>
            <person name="She Q."/>
            <person name="St Jean A."/>
            <person name="van der Oost J."/>
            <person name="Young F."/>
            <person name="Zivanovic Y."/>
            <person name="Doolittle W.F."/>
            <person name="Ragan M.A."/>
            <person name="Sensen C.W."/>
        </authorList>
    </citation>
    <scope>NUCLEOTIDE SEQUENCE [GENOMIC DNA]</scope>
    <source>
        <strain>ATCC 35092 / DSM 1617 / JCM 11322 / P2</strain>
    </source>
</reference>
<reference key="2">
    <citation type="journal article" date="2001" name="Proc. Natl. Acad. Sci. U.S.A.">
        <title>The complete genome of the crenarchaeon Sulfolobus solfataricus P2.</title>
        <authorList>
            <person name="She Q."/>
            <person name="Singh R.K."/>
            <person name="Confalonieri F."/>
            <person name="Zivanovic Y."/>
            <person name="Allard G."/>
            <person name="Awayez M.J."/>
            <person name="Chan-Weiher C.C.-Y."/>
            <person name="Clausen I.G."/>
            <person name="Curtis B.A."/>
            <person name="De Moors A."/>
            <person name="Erauso G."/>
            <person name="Fletcher C."/>
            <person name="Gordon P.M.K."/>
            <person name="Heikamp-de Jong I."/>
            <person name="Jeffries A.C."/>
            <person name="Kozera C.J."/>
            <person name="Medina N."/>
            <person name="Peng X."/>
            <person name="Thi-Ngoc H.P."/>
            <person name="Redder P."/>
            <person name="Schenk M.E."/>
            <person name="Theriault C."/>
            <person name="Tolstrup N."/>
            <person name="Charlebois R.L."/>
            <person name="Doolittle W.F."/>
            <person name="Duguet M."/>
            <person name="Gaasterland T."/>
            <person name="Garrett R.A."/>
            <person name="Ragan M.A."/>
            <person name="Sensen C.W."/>
            <person name="Van der Oost J."/>
        </authorList>
    </citation>
    <scope>NUCLEOTIDE SEQUENCE [LARGE SCALE GENOMIC DNA]</scope>
    <source>
        <strain>ATCC 35092 / DSM 1617 / JCM 11322 / P2</strain>
    </source>
</reference>
<reference key="3">
    <citation type="journal article" date="2003" name="Mol. Microbiol.">
        <title>An archaeal XPF repair endonuclease dependent on a heterotrimeric PCNA.</title>
        <authorList>
            <person name="Roberts J.A."/>
            <person name="Bell S.D."/>
            <person name="White M.F."/>
        </authorList>
    </citation>
    <scope>FUNCTION</scope>
    <scope>COFACTOR</scope>
    <scope>ACTIVITY REGULATION</scope>
    <scope>INTERACTION WITH PCNA1 AND PCNA3</scope>
    <scope>SUBUNIT</scope>
    <scope>MUTAGENESIS OF ASP-52 AND 228-SER--LEU-233</scope>
    <source>
        <strain>ATCC 35092 / DSM 1617 / JCM 11322 / P2</strain>
    </source>
</reference>
<dbReference type="EMBL" id="Y18930">
    <property type="protein sequence ID" value="CAB57574.1"/>
    <property type="molecule type" value="Genomic_DNA"/>
</dbReference>
<dbReference type="EMBL" id="AE006641">
    <property type="protein sequence ID" value="AAK41026.1"/>
    <property type="molecule type" value="Genomic_DNA"/>
</dbReference>
<dbReference type="PIR" id="C90221">
    <property type="entry name" value="C90221"/>
</dbReference>
<dbReference type="RefSeq" id="WP_009991296.1">
    <property type="nucleotide sequence ID" value="NC_002754.1"/>
</dbReference>
<dbReference type="SMR" id="Q7LXL5"/>
<dbReference type="STRING" id="273057.SSO0729"/>
<dbReference type="PaxDb" id="273057-SSO0729"/>
<dbReference type="EnsemblBacteria" id="AAK41026">
    <property type="protein sequence ID" value="AAK41026"/>
    <property type="gene ID" value="SSO0729"/>
</dbReference>
<dbReference type="GeneID" id="44129725"/>
<dbReference type="KEGG" id="sso:SSO0729"/>
<dbReference type="PATRIC" id="fig|273057.12.peg.726"/>
<dbReference type="eggNOG" id="arCOG04206">
    <property type="taxonomic scope" value="Archaea"/>
</dbReference>
<dbReference type="HOGENOM" id="CLU_101253_0_0_2"/>
<dbReference type="InParanoid" id="Q7LXL5"/>
<dbReference type="PhylomeDB" id="Q7LXL5"/>
<dbReference type="BRENDA" id="3.1.99.B2">
    <property type="organism ID" value="6163"/>
</dbReference>
<dbReference type="Proteomes" id="UP000001974">
    <property type="component" value="Chromosome"/>
</dbReference>
<dbReference type="GO" id="GO:0005524">
    <property type="term" value="F:ATP binding"/>
    <property type="evidence" value="ECO:0007669"/>
    <property type="project" value="UniProtKB-KW"/>
</dbReference>
<dbReference type="GO" id="GO:0003677">
    <property type="term" value="F:DNA binding"/>
    <property type="evidence" value="ECO:0007669"/>
    <property type="project" value="UniProtKB-KW"/>
</dbReference>
<dbReference type="GO" id="GO:0004519">
    <property type="term" value="F:endonuclease activity"/>
    <property type="evidence" value="ECO:0007669"/>
    <property type="project" value="UniProtKB-KW"/>
</dbReference>
<dbReference type="GO" id="GO:0006310">
    <property type="term" value="P:DNA recombination"/>
    <property type="evidence" value="ECO:0007669"/>
    <property type="project" value="UniProtKB-KW"/>
</dbReference>
<dbReference type="GO" id="GO:0006281">
    <property type="term" value="P:DNA repair"/>
    <property type="evidence" value="ECO:0007669"/>
    <property type="project" value="UniProtKB-KW"/>
</dbReference>
<dbReference type="CDD" id="cd20075">
    <property type="entry name" value="XPF_nuclease_XPF_arch"/>
    <property type="match status" value="1"/>
</dbReference>
<dbReference type="Gene3D" id="3.40.50.10130">
    <property type="match status" value="1"/>
</dbReference>
<dbReference type="Gene3D" id="1.10.150.20">
    <property type="entry name" value="5' to 3' exonuclease, C-terminal subdomain"/>
    <property type="match status" value="1"/>
</dbReference>
<dbReference type="InterPro" id="IPR053651">
    <property type="entry name" value="DNA_repair_endonuclease"/>
</dbReference>
<dbReference type="InterPro" id="IPR006166">
    <property type="entry name" value="ERCC4_domain"/>
</dbReference>
<dbReference type="InterPro" id="IPR011335">
    <property type="entry name" value="Restrct_endonuc-II-like"/>
</dbReference>
<dbReference type="InterPro" id="IPR010994">
    <property type="entry name" value="RuvA_2-like"/>
</dbReference>
<dbReference type="NCBIfam" id="NF040956">
    <property type="entry name" value="Arch_Xpf_endonucase"/>
    <property type="match status" value="1"/>
</dbReference>
<dbReference type="PANTHER" id="PTHR10150">
    <property type="entry name" value="DNA REPAIR ENDONUCLEASE XPF"/>
    <property type="match status" value="1"/>
</dbReference>
<dbReference type="PANTHER" id="PTHR10150:SF0">
    <property type="entry name" value="DNA REPAIR ENDONUCLEASE XPF"/>
    <property type="match status" value="1"/>
</dbReference>
<dbReference type="Pfam" id="PF02732">
    <property type="entry name" value="ERCC4"/>
    <property type="match status" value="1"/>
</dbReference>
<dbReference type="SMART" id="SM00891">
    <property type="entry name" value="ERCC4"/>
    <property type="match status" value="1"/>
</dbReference>
<dbReference type="SUPFAM" id="SSF52980">
    <property type="entry name" value="Restriction endonuclease-like"/>
    <property type="match status" value="1"/>
</dbReference>
<dbReference type="SUPFAM" id="SSF47781">
    <property type="entry name" value="RuvA domain 2-like"/>
    <property type="match status" value="1"/>
</dbReference>